<reference key="1">
    <citation type="journal article" date="2005" name="Genome Biol.">
        <title>Full-length cDNAs from chicken bursal lymphocytes to facilitate gene function analysis.</title>
        <authorList>
            <person name="Caldwell R.B."/>
            <person name="Kierzek A.M."/>
            <person name="Arakawa H."/>
            <person name="Bezzubov Y."/>
            <person name="Zaim J."/>
            <person name="Fiedler P."/>
            <person name="Kutter S."/>
            <person name="Blagodatski A."/>
            <person name="Kostovska D."/>
            <person name="Koter M."/>
            <person name="Plachy J."/>
            <person name="Carninci P."/>
            <person name="Hayashizaki Y."/>
            <person name="Buerstedde J.-M."/>
        </authorList>
    </citation>
    <scope>NUCLEOTIDE SEQUENCE [LARGE SCALE MRNA]</scope>
    <source>
        <strain>CB</strain>
        <tissue>Bursa of Fabricius</tissue>
    </source>
</reference>
<gene>
    <name type="primary">MEAF6</name>
    <name type="ORF">RCJMB04_23a7</name>
</gene>
<proteinExistence type="evidence at transcript level"/>
<accession>Q5ZIX3</accession>
<keyword id="KW-0010">Activator</keyword>
<keyword id="KW-0137">Centromere</keyword>
<keyword id="KW-0156">Chromatin regulator</keyword>
<keyword id="KW-0158">Chromosome</keyword>
<keyword id="KW-0175">Coiled coil</keyword>
<keyword id="KW-0995">Kinetochore</keyword>
<keyword id="KW-0539">Nucleus</keyword>
<keyword id="KW-1185">Reference proteome</keyword>
<keyword id="KW-0804">Transcription</keyword>
<keyword id="KW-0805">Transcription regulation</keyword>
<comment type="function">
    <text evidence="1">Component of the NuA4 histone acetyltransferase complex which is involved in transcriptional activation of select genes principally by acetylation of nucleosomal histone H4 and H2A. This modification may both alter nucleosome - DNA interactions and promote interaction of the modified histones with other proteins which positively regulate transcription. Component of HBO1 complexes, which specifically mediate acetylation of histone H3 at 'Lys-14' (H3K14ac), and have reduced activity toward histone H4. Component of the MOZ/MORF complex which has a histone H3 acetyltransferase activity (By similarity).</text>
</comment>
<comment type="subunit">
    <text evidence="1">Component of the NuA4 histone acetyltransferase complex. Component of the hbo1 complex. Component of the moz/morf complex (By similarity).</text>
</comment>
<comment type="subcellular location">
    <subcellularLocation>
        <location evidence="1">Nucleus</location>
        <location evidence="1">Nucleolus</location>
    </subcellularLocation>
    <subcellularLocation>
        <location evidence="1">Chromosome</location>
        <location evidence="1">Centromere</location>
        <location evidence="1">Kinetochore</location>
    </subcellularLocation>
</comment>
<comment type="similarity">
    <text evidence="4">Belongs to the EAF6 family.</text>
</comment>
<dbReference type="EMBL" id="AJ720661">
    <property type="protein sequence ID" value="CAG32320.1"/>
    <property type="molecule type" value="mRNA"/>
</dbReference>
<dbReference type="RefSeq" id="NP_001026068.1">
    <property type="nucleotide sequence ID" value="NM_001030897.1"/>
</dbReference>
<dbReference type="SMR" id="Q5ZIX3"/>
<dbReference type="FunCoup" id="Q5ZIX3">
    <property type="interactions" value="1694"/>
</dbReference>
<dbReference type="STRING" id="9031.ENSGALP00000046652"/>
<dbReference type="PaxDb" id="9031-ENSGALP00000003129"/>
<dbReference type="Ensembl" id="ENSGALT00010040216.1">
    <property type="protein sequence ID" value="ENSGALP00010023318.1"/>
    <property type="gene ID" value="ENSGALG00010016677.1"/>
</dbReference>
<dbReference type="KEGG" id="gga:419617"/>
<dbReference type="VEuPathDB" id="HostDB:geneid_419617"/>
<dbReference type="eggNOG" id="KOG3856">
    <property type="taxonomic scope" value="Eukaryota"/>
</dbReference>
<dbReference type="GeneTree" id="ENSGT00390000015257"/>
<dbReference type="InParanoid" id="Q5ZIX3"/>
<dbReference type="OrthoDB" id="440324at2759"/>
<dbReference type="PhylomeDB" id="Q5ZIX3"/>
<dbReference type="Reactome" id="R-GGA-6804758">
    <property type="pathway name" value="Regulation of TP53 Activity through Acetylation"/>
</dbReference>
<dbReference type="PRO" id="PR:Q5ZIX3"/>
<dbReference type="Proteomes" id="UP000000539">
    <property type="component" value="Chromosome 23"/>
</dbReference>
<dbReference type="Bgee" id="ENSGALG00000002013">
    <property type="expression patterns" value="Expressed in spermatid and 13 other cell types or tissues"/>
</dbReference>
<dbReference type="GO" id="GO:0000776">
    <property type="term" value="C:kinetochore"/>
    <property type="evidence" value="ECO:0000250"/>
    <property type="project" value="UniProtKB"/>
</dbReference>
<dbReference type="GO" id="GO:0070776">
    <property type="term" value="C:MOZ/MORF histone acetyltransferase complex"/>
    <property type="evidence" value="ECO:0000250"/>
    <property type="project" value="UniProtKB"/>
</dbReference>
<dbReference type="GO" id="GO:0035267">
    <property type="term" value="C:NuA4 histone acetyltransferase complex"/>
    <property type="evidence" value="ECO:0000250"/>
    <property type="project" value="UniProtKB"/>
</dbReference>
<dbReference type="GO" id="GO:0005730">
    <property type="term" value="C:nucleolus"/>
    <property type="evidence" value="ECO:0000250"/>
    <property type="project" value="UniProtKB"/>
</dbReference>
<dbReference type="GO" id="GO:0006338">
    <property type="term" value="P:chromatin remodeling"/>
    <property type="evidence" value="ECO:0007669"/>
    <property type="project" value="GOC"/>
</dbReference>
<dbReference type="InterPro" id="IPR015418">
    <property type="entry name" value="Eaf6"/>
</dbReference>
<dbReference type="PANTHER" id="PTHR13476">
    <property type="entry name" value="CHROMATIN MODIFICATION-RELATED PROTEIN MEAF6"/>
    <property type="match status" value="1"/>
</dbReference>
<dbReference type="Pfam" id="PF09340">
    <property type="entry name" value="NuA4"/>
    <property type="match status" value="1"/>
</dbReference>
<name>EAF6_CHICK</name>
<protein>
    <recommendedName>
        <fullName>Chromatin modification-related protein MEAF6</fullName>
        <shortName>MYST/Esa1-associated factor 6</shortName>
    </recommendedName>
    <alternativeName>
        <fullName>Esa1-associated factor 6 homolog</fullName>
        <shortName>Protein EAF6 homolog</shortName>
    </alternativeName>
</protein>
<feature type="chain" id="PRO_0000272611" description="Chromatin modification-related protein MEAF6">
    <location>
        <begin position="1"/>
        <end position="182"/>
    </location>
</feature>
<feature type="region of interest" description="Disordered" evidence="3">
    <location>
        <begin position="107"/>
        <end position="182"/>
    </location>
</feature>
<feature type="coiled-coil region" evidence="2">
    <location>
        <begin position="13"/>
        <end position="49"/>
    </location>
</feature>
<feature type="compositionally biased region" description="Polar residues" evidence="3">
    <location>
        <begin position="121"/>
        <end position="130"/>
    </location>
</feature>
<feature type="compositionally biased region" description="Acidic residues" evidence="3">
    <location>
        <begin position="137"/>
        <end position="146"/>
    </location>
</feature>
<feature type="compositionally biased region" description="Basic residues" evidence="3">
    <location>
        <begin position="166"/>
        <end position="182"/>
    </location>
</feature>
<organism>
    <name type="scientific">Gallus gallus</name>
    <name type="common">Chicken</name>
    <dbReference type="NCBI Taxonomy" id="9031"/>
    <lineage>
        <taxon>Eukaryota</taxon>
        <taxon>Metazoa</taxon>
        <taxon>Chordata</taxon>
        <taxon>Craniata</taxon>
        <taxon>Vertebrata</taxon>
        <taxon>Euteleostomi</taxon>
        <taxon>Archelosauria</taxon>
        <taxon>Archosauria</taxon>
        <taxon>Dinosauria</taxon>
        <taxon>Saurischia</taxon>
        <taxon>Theropoda</taxon>
        <taxon>Coelurosauria</taxon>
        <taxon>Aves</taxon>
        <taxon>Neognathae</taxon>
        <taxon>Galloanserae</taxon>
        <taxon>Galliformes</taxon>
        <taxon>Phasianidae</taxon>
        <taxon>Phasianinae</taxon>
        <taxon>Gallus</taxon>
    </lineage>
</organism>
<evidence type="ECO:0000250" key="1">
    <source>
        <dbReference type="UniProtKB" id="Q9HAF1"/>
    </source>
</evidence>
<evidence type="ECO:0000255" key="2"/>
<evidence type="ECO:0000256" key="3">
    <source>
        <dbReference type="SAM" id="MobiDB-lite"/>
    </source>
</evidence>
<evidence type="ECO:0000305" key="4"/>
<sequence length="182" mass="20458">MAALHAKAGGPPQIPDTRRELAELVKRKQELAETLANLERQIYAFEGSYLEDTQMYGNIIRGWDRYLTNQKNSNSKNDRRNRKFKEAERLFSKSSVTSAAAVSALAGVQDQLIEKREPGSGTESDTSPDFHNQENEPSQEDAEELDGSVQGVKPQKAASSTSGSHHSSHKKRKNKNRHRYVY</sequence>